<protein>
    <recommendedName>
        <fullName evidence="1">DNA-directed RNA polymerase subunit alpha</fullName>
        <shortName evidence="1">RNAP subunit alpha</shortName>
        <ecNumber evidence="1">2.7.7.6</ecNumber>
    </recommendedName>
    <alternativeName>
        <fullName evidence="1">RNA polymerase subunit alpha</fullName>
    </alternativeName>
    <alternativeName>
        <fullName evidence="1">Transcriptase subunit alpha</fullName>
    </alternativeName>
</protein>
<gene>
    <name evidence="1" type="primary">rpoA</name>
    <name type="ordered locus">LBUL_0376</name>
</gene>
<name>RPOA_LACDB</name>
<accession>Q04BY9</accession>
<comment type="function">
    <text evidence="1">DNA-dependent RNA polymerase catalyzes the transcription of DNA into RNA using the four ribonucleoside triphosphates as substrates.</text>
</comment>
<comment type="catalytic activity">
    <reaction evidence="1">
        <text>RNA(n) + a ribonucleoside 5'-triphosphate = RNA(n+1) + diphosphate</text>
        <dbReference type="Rhea" id="RHEA:21248"/>
        <dbReference type="Rhea" id="RHEA-COMP:14527"/>
        <dbReference type="Rhea" id="RHEA-COMP:17342"/>
        <dbReference type="ChEBI" id="CHEBI:33019"/>
        <dbReference type="ChEBI" id="CHEBI:61557"/>
        <dbReference type="ChEBI" id="CHEBI:140395"/>
        <dbReference type="EC" id="2.7.7.6"/>
    </reaction>
</comment>
<comment type="subunit">
    <text evidence="1">Homodimer. The RNAP catalytic core consists of 2 alpha, 1 beta, 1 beta' and 1 omega subunit. When a sigma factor is associated with the core the holoenzyme is formed, which can initiate transcription.</text>
</comment>
<comment type="domain">
    <text evidence="1">The N-terminal domain is essential for RNAP assembly and basal transcription, whereas the C-terminal domain is involved in interaction with transcriptional regulators and with upstream promoter elements.</text>
</comment>
<comment type="similarity">
    <text evidence="1">Belongs to the RNA polymerase alpha chain family.</text>
</comment>
<evidence type="ECO:0000255" key="1">
    <source>
        <dbReference type="HAMAP-Rule" id="MF_00059"/>
    </source>
</evidence>
<keyword id="KW-0240">DNA-directed RNA polymerase</keyword>
<keyword id="KW-0548">Nucleotidyltransferase</keyword>
<keyword id="KW-0804">Transcription</keyword>
<keyword id="KW-0808">Transferase</keyword>
<dbReference type="EC" id="2.7.7.6" evidence="1"/>
<dbReference type="EMBL" id="CP000412">
    <property type="protein sequence ID" value="ABJ58033.1"/>
    <property type="molecule type" value="Genomic_DNA"/>
</dbReference>
<dbReference type="RefSeq" id="WP_011678029.1">
    <property type="nucleotide sequence ID" value="NC_008529.1"/>
</dbReference>
<dbReference type="SMR" id="Q04BY9"/>
<dbReference type="KEGG" id="lbu:LBUL_0376"/>
<dbReference type="HOGENOM" id="CLU_053084_0_1_9"/>
<dbReference type="BioCyc" id="LDEL321956:LBUL_RS01755-MONOMER"/>
<dbReference type="GO" id="GO:0005737">
    <property type="term" value="C:cytoplasm"/>
    <property type="evidence" value="ECO:0007669"/>
    <property type="project" value="UniProtKB-ARBA"/>
</dbReference>
<dbReference type="GO" id="GO:0000428">
    <property type="term" value="C:DNA-directed RNA polymerase complex"/>
    <property type="evidence" value="ECO:0007669"/>
    <property type="project" value="UniProtKB-KW"/>
</dbReference>
<dbReference type="GO" id="GO:0003677">
    <property type="term" value="F:DNA binding"/>
    <property type="evidence" value="ECO:0007669"/>
    <property type="project" value="UniProtKB-UniRule"/>
</dbReference>
<dbReference type="GO" id="GO:0003899">
    <property type="term" value="F:DNA-directed RNA polymerase activity"/>
    <property type="evidence" value="ECO:0007669"/>
    <property type="project" value="UniProtKB-UniRule"/>
</dbReference>
<dbReference type="GO" id="GO:0046983">
    <property type="term" value="F:protein dimerization activity"/>
    <property type="evidence" value="ECO:0007669"/>
    <property type="project" value="InterPro"/>
</dbReference>
<dbReference type="GO" id="GO:0006351">
    <property type="term" value="P:DNA-templated transcription"/>
    <property type="evidence" value="ECO:0007669"/>
    <property type="project" value="UniProtKB-UniRule"/>
</dbReference>
<dbReference type="CDD" id="cd06928">
    <property type="entry name" value="RNAP_alpha_NTD"/>
    <property type="match status" value="1"/>
</dbReference>
<dbReference type="FunFam" id="1.10.150.20:FF:000001">
    <property type="entry name" value="DNA-directed RNA polymerase subunit alpha"/>
    <property type="match status" value="1"/>
</dbReference>
<dbReference type="FunFam" id="2.170.120.12:FF:000001">
    <property type="entry name" value="DNA-directed RNA polymerase subunit alpha"/>
    <property type="match status" value="1"/>
</dbReference>
<dbReference type="Gene3D" id="1.10.150.20">
    <property type="entry name" value="5' to 3' exonuclease, C-terminal subdomain"/>
    <property type="match status" value="1"/>
</dbReference>
<dbReference type="Gene3D" id="2.170.120.12">
    <property type="entry name" value="DNA-directed RNA polymerase, insert domain"/>
    <property type="match status" value="1"/>
</dbReference>
<dbReference type="Gene3D" id="3.30.1360.10">
    <property type="entry name" value="RNA polymerase, RBP11-like subunit"/>
    <property type="match status" value="1"/>
</dbReference>
<dbReference type="HAMAP" id="MF_00059">
    <property type="entry name" value="RNApol_bact_RpoA"/>
    <property type="match status" value="1"/>
</dbReference>
<dbReference type="InterPro" id="IPR011262">
    <property type="entry name" value="DNA-dir_RNA_pol_insert"/>
</dbReference>
<dbReference type="InterPro" id="IPR011263">
    <property type="entry name" value="DNA-dir_RNA_pol_RpoA/D/Rpb3"/>
</dbReference>
<dbReference type="InterPro" id="IPR011773">
    <property type="entry name" value="DNA-dir_RpoA"/>
</dbReference>
<dbReference type="InterPro" id="IPR036603">
    <property type="entry name" value="RBP11-like"/>
</dbReference>
<dbReference type="InterPro" id="IPR011260">
    <property type="entry name" value="RNAP_asu_C"/>
</dbReference>
<dbReference type="InterPro" id="IPR036643">
    <property type="entry name" value="RNApol_insert_sf"/>
</dbReference>
<dbReference type="NCBIfam" id="NF003513">
    <property type="entry name" value="PRK05182.1-2"/>
    <property type="match status" value="1"/>
</dbReference>
<dbReference type="NCBIfam" id="NF003515">
    <property type="entry name" value="PRK05182.2-1"/>
    <property type="match status" value="1"/>
</dbReference>
<dbReference type="NCBIfam" id="NF003519">
    <property type="entry name" value="PRK05182.2-5"/>
    <property type="match status" value="1"/>
</dbReference>
<dbReference type="NCBIfam" id="TIGR02027">
    <property type="entry name" value="rpoA"/>
    <property type="match status" value="1"/>
</dbReference>
<dbReference type="Pfam" id="PF01000">
    <property type="entry name" value="RNA_pol_A_bac"/>
    <property type="match status" value="1"/>
</dbReference>
<dbReference type="Pfam" id="PF03118">
    <property type="entry name" value="RNA_pol_A_CTD"/>
    <property type="match status" value="1"/>
</dbReference>
<dbReference type="Pfam" id="PF01193">
    <property type="entry name" value="RNA_pol_L"/>
    <property type="match status" value="1"/>
</dbReference>
<dbReference type="SMART" id="SM00662">
    <property type="entry name" value="RPOLD"/>
    <property type="match status" value="1"/>
</dbReference>
<dbReference type="SUPFAM" id="SSF47789">
    <property type="entry name" value="C-terminal domain of RNA polymerase alpha subunit"/>
    <property type="match status" value="1"/>
</dbReference>
<dbReference type="SUPFAM" id="SSF56553">
    <property type="entry name" value="Insert subdomain of RNA polymerase alpha subunit"/>
    <property type="match status" value="1"/>
</dbReference>
<dbReference type="SUPFAM" id="SSF55257">
    <property type="entry name" value="RBP11-like subunits of RNA polymerase"/>
    <property type="match status" value="1"/>
</dbReference>
<proteinExistence type="inferred from homology"/>
<reference key="1">
    <citation type="journal article" date="2006" name="Proc. Natl. Acad. Sci. U.S.A.">
        <title>Comparative genomics of the lactic acid bacteria.</title>
        <authorList>
            <person name="Makarova K.S."/>
            <person name="Slesarev A."/>
            <person name="Wolf Y.I."/>
            <person name="Sorokin A."/>
            <person name="Mirkin B."/>
            <person name="Koonin E.V."/>
            <person name="Pavlov A."/>
            <person name="Pavlova N."/>
            <person name="Karamychev V."/>
            <person name="Polouchine N."/>
            <person name="Shakhova V."/>
            <person name="Grigoriev I."/>
            <person name="Lou Y."/>
            <person name="Rohksar D."/>
            <person name="Lucas S."/>
            <person name="Huang K."/>
            <person name="Goodstein D.M."/>
            <person name="Hawkins T."/>
            <person name="Plengvidhya V."/>
            <person name="Welker D."/>
            <person name="Hughes J."/>
            <person name="Goh Y."/>
            <person name="Benson A."/>
            <person name="Baldwin K."/>
            <person name="Lee J.-H."/>
            <person name="Diaz-Muniz I."/>
            <person name="Dosti B."/>
            <person name="Smeianov V."/>
            <person name="Wechter W."/>
            <person name="Barabote R."/>
            <person name="Lorca G."/>
            <person name="Altermann E."/>
            <person name="Barrangou R."/>
            <person name="Ganesan B."/>
            <person name="Xie Y."/>
            <person name="Rawsthorne H."/>
            <person name="Tamir D."/>
            <person name="Parker C."/>
            <person name="Breidt F."/>
            <person name="Broadbent J.R."/>
            <person name="Hutkins R."/>
            <person name="O'Sullivan D."/>
            <person name="Steele J."/>
            <person name="Unlu G."/>
            <person name="Saier M.H. Jr."/>
            <person name="Klaenhammer T."/>
            <person name="Richardson P."/>
            <person name="Kozyavkin S."/>
            <person name="Weimer B.C."/>
            <person name="Mills D.A."/>
        </authorList>
    </citation>
    <scope>NUCLEOTIDE SEQUENCE [LARGE SCALE GENOMIC DNA]</scope>
    <source>
        <strain>ATCC BAA-365 / Lb-18</strain>
    </source>
</reference>
<sequence>MIEFKKPNITVVDQEDSYGKFVVEPLERGFGTTLGNSLRRVLLTSVPGTGLVKVKIDGILHEFTTVPGVKEDVTKIILNLKKLELRAYTEEVKTIELDVEGPATVTAEDLKADADVEVLNPDQYICTIAQGGHLHMWIDVCNGRGYVPASENKTAEMSIGDIPVDSLFSPIEKVNYQVESTRVGKREDFDKLTMEIWTNGSIAPNDALNFAARVLVEHFKAFESADAAAEIGEVMVEQENDQKEKKLEMTIEDLDLSVRSYNCLKRAGINTLQDLTVKSEAEMMRVRNLGRKSLEEVKNKLADLGLSLRQED</sequence>
<feature type="chain" id="PRO_0000296822" description="DNA-directed RNA polymerase subunit alpha">
    <location>
        <begin position="1"/>
        <end position="312"/>
    </location>
</feature>
<feature type="region of interest" description="Alpha N-terminal domain (alpha-NTD)" evidence="1">
    <location>
        <begin position="1"/>
        <end position="226"/>
    </location>
</feature>
<feature type="region of interest" description="Alpha C-terminal domain (alpha-CTD)" evidence="1">
    <location>
        <begin position="243"/>
        <end position="312"/>
    </location>
</feature>
<organism>
    <name type="scientific">Lactobacillus delbrueckii subsp. bulgaricus (strain ATCC BAA-365 / Lb-18)</name>
    <dbReference type="NCBI Taxonomy" id="321956"/>
    <lineage>
        <taxon>Bacteria</taxon>
        <taxon>Bacillati</taxon>
        <taxon>Bacillota</taxon>
        <taxon>Bacilli</taxon>
        <taxon>Lactobacillales</taxon>
        <taxon>Lactobacillaceae</taxon>
        <taxon>Lactobacillus</taxon>
    </lineage>
</organism>